<evidence type="ECO:0000255" key="1"/>
<evidence type="ECO:0000256" key="2">
    <source>
        <dbReference type="SAM" id="MobiDB-lite"/>
    </source>
</evidence>
<evidence type="ECO:0000305" key="3"/>
<organism>
    <name type="scientific">Treponema pallidum (strain Nichols)</name>
    <dbReference type="NCBI Taxonomy" id="243276"/>
    <lineage>
        <taxon>Bacteria</taxon>
        <taxon>Pseudomonadati</taxon>
        <taxon>Spirochaetota</taxon>
        <taxon>Spirochaetia</taxon>
        <taxon>Spirochaetales</taxon>
        <taxon>Treponemataceae</taxon>
        <taxon>Treponema</taxon>
    </lineage>
</organism>
<proteinExistence type="predicted"/>
<feature type="chain" id="PRO_0000202315" description="Uncharacterized protein TP_0753">
    <location>
        <begin position="1"/>
        <end position="94"/>
    </location>
</feature>
<feature type="transmembrane region" description="Helical" evidence="1">
    <location>
        <begin position="7"/>
        <end position="24"/>
    </location>
</feature>
<feature type="transmembrane region" description="Helical" evidence="1">
    <location>
        <begin position="39"/>
        <end position="61"/>
    </location>
</feature>
<feature type="region of interest" description="Disordered" evidence="2">
    <location>
        <begin position="68"/>
        <end position="94"/>
    </location>
</feature>
<reference key="1">
    <citation type="journal article" date="1998" name="Science">
        <title>Complete genome sequence of Treponema pallidum, the syphilis spirochete.</title>
        <authorList>
            <person name="Fraser C.M."/>
            <person name="Norris S.J."/>
            <person name="Weinstock G.M."/>
            <person name="White O."/>
            <person name="Sutton G.G."/>
            <person name="Dodson R.J."/>
            <person name="Gwinn M.L."/>
            <person name="Hickey E.K."/>
            <person name="Clayton R.A."/>
            <person name="Ketchum K.A."/>
            <person name="Sodergren E."/>
            <person name="Hardham J.M."/>
            <person name="McLeod M.P."/>
            <person name="Salzberg S.L."/>
            <person name="Peterson J.D."/>
            <person name="Khalak H.G."/>
            <person name="Richardson D.L."/>
            <person name="Howell J.K."/>
            <person name="Chidambaram M."/>
            <person name="Utterback T.R."/>
            <person name="McDonald L.A."/>
            <person name="Artiach P."/>
            <person name="Bowman C."/>
            <person name="Cotton M.D."/>
            <person name="Fujii C."/>
            <person name="Garland S.A."/>
            <person name="Hatch B."/>
            <person name="Horst K."/>
            <person name="Roberts K.M."/>
            <person name="Sandusky M."/>
            <person name="Weidman J.F."/>
            <person name="Smith H.O."/>
            <person name="Venter J.C."/>
        </authorList>
    </citation>
    <scope>NUCLEOTIDE SEQUENCE [LARGE SCALE GENOMIC DNA]</scope>
    <source>
        <strain>Nichols</strain>
    </source>
</reference>
<gene>
    <name type="ordered locus">TP_0753</name>
</gene>
<protein>
    <recommendedName>
        <fullName>Uncharacterized protein TP_0753</fullName>
    </recommendedName>
</protein>
<name>Y753_TREPA</name>
<dbReference type="EMBL" id="AE000520">
    <property type="protein sequence ID" value="AAC65730.1"/>
    <property type="molecule type" value="Genomic_DNA"/>
</dbReference>
<dbReference type="PIR" id="D71284">
    <property type="entry name" value="D71284"/>
</dbReference>
<dbReference type="RefSeq" id="WP_010882198.1">
    <property type="nucleotide sequence ID" value="NC_021490.2"/>
</dbReference>
<dbReference type="SMR" id="O83734"/>
<dbReference type="IntAct" id="O83734">
    <property type="interactions" value="2"/>
</dbReference>
<dbReference type="STRING" id="243276.TP_0753"/>
<dbReference type="EnsemblBacteria" id="AAC65730">
    <property type="protein sequence ID" value="AAC65730"/>
    <property type="gene ID" value="TP_0753"/>
</dbReference>
<dbReference type="KEGG" id="tpa:TP_0753"/>
<dbReference type="KEGG" id="tpw:TPANIC_0753"/>
<dbReference type="HOGENOM" id="CLU_2385255_0_0_12"/>
<dbReference type="OrthoDB" id="371372at2"/>
<dbReference type="Proteomes" id="UP000000811">
    <property type="component" value="Chromosome"/>
</dbReference>
<dbReference type="GO" id="GO:0005886">
    <property type="term" value="C:plasma membrane"/>
    <property type="evidence" value="ECO:0007669"/>
    <property type="project" value="UniProtKB-SubCell"/>
</dbReference>
<accession>O83734</accession>
<keyword id="KW-1003">Cell membrane</keyword>
<keyword id="KW-0472">Membrane</keyword>
<keyword id="KW-1185">Reference proteome</keyword>
<keyword id="KW-0812">Transmembrane</keyword>
<keyword id="KW-1133">Transmembrane helix</keyword>
<sequence length="94" mass="10330">MTYGKLIFFIIVLVGFALFMSFNVEHRCDVSLVFYTFQAVPITLSLLFAFACGALTALLFLIDPDAKTRKQKREDSPTSAPTGGVSSPEHVDVP</sequence>
<comment type="subcellular location">
    <subcellularLocation>
        <location evidence="3">Cell membrane</location>
        <topology evidence="3">Multi-pass membrane protein</topology>
    </subcellularLocation>
</comment>